<proteinExistence type="inferred from homology"/>
<gene>
    <name evidence="1" type="primary">ruvA</name>
    <name type="ordered locus">Bphyt_3345</name>
</gene>
<sequence>MIGRIAGVLLEKNPPHLLIDCNGVGYEVDVPMSTFYNLPSTGERVVLLTQMIVREDAHLLYGFGTAEERSTFRELLKISGIGARMALAVLSGMSVHELAQTVTMQDAARLTRVPGIGKKTAERLLLELKGKIGADLGAMAGAASASDHASDILNALLALGYSEKEALTAVKNVPAGTGVSEGIKLALKALSKG</sequence>
<protein>
    <recommendedName>
        <fullName evidence="1">Holliday junction branch migration complex subunit RuvA</fullName>
    </recommendedName>
</protein>
<accession>B2SYK1</accession>
<name>RUVA_PARPJ</name>
<organism>
    <name type="scientific">Paraburkholderia phytofirmans (strain DSM 17436 / LMG 22146 / PsJN)</name>
    <name type="common">Burkholderia phytofirmans</name>
    <dbReference type="NCBI Taxonomy" id="398527"/>
    <lineage>
        <taxon>Bacteria</taxon>
        <taxon>Pseudomonadati</taxon>
        <taxon>Pseudomonadota</taxon>
        <taxon>Betaproteobacteria</taxon>
        <taxon>Burkholderiales</taxon>
        <taxon>Burkholderiaceae</taxon>
        <taxon>Paraburkholderia</taxon>
    </lineage>
</organism>
<dbReference type="EMBL" id="CP001052">
    <property type="protein sequence ID" value="ACD17736.1"/>
    <property type="molecule type" value="Genomic_DNA"/>
</dbReference>
<dbReference type="RefSeq" id="WP_012434303.1">
    <property type="nucleotide sequence ID" value="NC_010681.1"/>
</dbReference>
<dbReference type="SMR" id="B2SYK1"/>
<dbReference type="STRING" id="398527.Bphyt_3345"/>
<dbReference type="KEGG" id="bpy:Bphyt_3345"/>
<dbReference type="eggNOG" id="COG0632">
    <property type="taxonomic scope" value="Bacteria"/>
</dbReference>
<dbReference type="HOGENOM" id="CLU_087936_0_0_4"/>
<dbReference type="OrthoDB" id="5293449at2"/>
<dbReference type="Proteomes" id="UP000001739">
    <property type="component" value="Chromosome 1"/>
</dbReference>
<dbReference type="GO" id="GO:0005737">
    <property type="term" value="C:cytoplasm"/>
    <property type="evidence" value="ECO:0007669"/>
    <property type="project" value="UniProtKB-SubCell"/>
</dbReference>
<dbReference type="GO" id="GO:0009379">
    <property type="term" value="C:Holliday junction helicase complex"/>
    <property type="evidence" value="ECO:0007669"/>
    <property type="project" value="InterPro"/>
</dbReference>
<dbReference type="GO" id="GO:0048476">
    <property type="term" value="C:Holliday junction resolvase complex"/>
    <property type="evidence" value="ECO:0007669"/>
    <property type="project" value="UniProtKB-UniRule"/>
</dbReference>
<dbReference type="GO" id="GO:0005524">
    <property type="term" value="F:ATP binding"/>
    <property type="evidence" value="ECO:0007669"/>
    <property type="project" value="InterPro"/>
</dbReference>
<dbReference type="GO" id="GO:0000400">
    <property type="term" value="F:four-way junction DNA binding"/>
    <property type="evidence" value="ECO:0007669"/>
    <property type="project" value="UniProtKB-UniRule"/>
</dbReference>
<dbReference type="GO" id="GO:0009378">
    <property type="term" value="F:four-way junction helicase activity"/>
    <property type="evidence" value="ECO:0007669"/>
    <property type="project" value="InterPro"/>
</dbReference>
<dbReference type="GO" id="GO:0006310">
    <property type="term" value="P:DNA recombination"/>
    <property type="evidence" value="ECO:0007669"/>
    <property type="project" value="UniProtKB-UniRule"/>
</dbReference>
<dbReference type="GO" id="GO:0006281">
    <property type="term" value="P:DNA repair"/>
    <property type="evidence" value="ECO:0007669"/>
    <property type="project" value="UniProtKB-UniRule"/>
</dbReference>
<dbReference type="CDD" id="cd14332">
    <property type="entry name" value="UBA_RuvA_C"/>
    <property type="match status" value="1"/>
</dbReference>
<dbReference type="Gene3D" id="1.10.150.20">
    <property type="entry name" value="5' to 3' exonuclease, C-terminal subdomain"/>
    <property type="match status" value="1"/>
</dbReference>
<dbReference type="Gene3D" id="1.10.8.10">
    <property type="entry name" value="DNA helicase RuvA subunit, C-terminal domain"/>
    <property type="match status" value="1"/>
</dbReference>
<dbReference type="Gene3D" id="2.40.50.140">
    <property type="entry name" value="Nucleic acid-binding proteins"/>
    <property type="match status" value="1"/>
</dbReference>
<dbReference type="HAMAP" id="MF_00031">
    <property type="entry name" value="DNA_HJ_migration_RuvA"/>
    <property type="match status" value="1"/>
</dbReference>
<dbReference type="InterPro" id="IPR013849">
    <property type="entry name" value="DNA_helicase_Holl-junc_RuvA_I"/>
</dbReference>
<dbReference type="InterPro" id="IPR003583">
    <property type="entry name" value="Hlx-hairpin-Hlx_DNA-bd_motif"/>
</dbReference>
<dbReference type="InterPro" id="IPR012340">
    <property type="entry name" value="NA-bd_OB-fold"/>
</dbReference>
<dbReference type="InterPro" id="IPR000085">
    <property type="entry name" value="RuvA"/>
</dbReference>
<dbReference type="InterPro" id="IPR010994">
    <property type="entry name" value="RuvA_2-like"/>
</dbReference>
<dbReference type="InterPro" id="IPR011114">
    <property type="entry name" value="RuvA_C"/>
</dbReference>
<dbReference type="InterPro" id="IPR036267">
    <property type="entry name" value="RuvA_C_sf"/>
</dbReference>
<dbReference type="NCBIfam" id="TIGR00084">
    <property type="entry name" value="ruvA"/>
    <property type="match status" value="1"/>
</dbReference>
<dbReference type="Pfam" id="PF14520">
    <property type="entry name" value="HHH_5"/>
    <property type="match status" value="1"/>
</dbReference>
<dbReference type="Pfam" id="PF07499">
    <property type="entry name" value="RuvA_C"/>
    <property type="match status" value="1"/>
</dbReference>
<dbReference type="Pfam" id="PF01330">
    <property type="entry name" value="RuvA_N"/>
    <property type="match status" value="1"/>
</dbReference>
<dbReference type="SMART" id="SM00278">
    <property type="entry name" value="HhH1"/>
    <property type="match status" value="2"/>
</dbReference>
<dbReference type="SUPFAM" id="SSF46929">
    <property type="entry name" value="DNA helicase RuvA subunit, C-terminal domain"/>
    <property type="match status" value="1"/>
</dbReference>
<dbReference type="SUPFAM" id="SSF50249">
    <property type="entry name" value="Nucleic acid-binding proteins"/>
    <property type="match status" value="1"/>
</dbReference>
<dbReference type="SUPFAM" id="SSF47781">
    <property type="entry name" value="RuvA domain 2-like"/>
    <property type="match status" value="1"/>
</dbReference>
<feature type="chain" id="PRO_1000090294" description="Holliday junction branch migration complex subunit RuvA">
    <location>
        <begin position="1"/>
        <end position="193"/>
    </location>
</feature>
<feature type="region of interest" description="Domain I" evidence="1">
    <location>
        <begin position="1"/>
        <end position="64"/>
    </location>
</feature>
<feature type="region of interest" description="Domain II" evidence="1">
    <location>
        <begin position="65"/>
        <end position="139"/>
    </location>
</feature>
<feature type="region of interest" description="Flexible linker" evidence="1">
    <location>
        <begin position="139"/>
        <end position="143"/>
    </location>
</feature>
<feature type="region of interest" description="Domain III" evidence="1">
    <location>
        <begin position="144"/>
        <end position="193"/>
    </location>
</feature>
<keyword id="KW-0963">Cytoplasm</keyword>
<keyword id="KW-0227">DNA damage</keyword>
<keyword id="KW-0233">DNA recombination</keyword>
<keyword id="KW-0234">DNA repair</keyword>
<keyword id="KW-0238">DNA-binding</keyword>
<reference key="1">
    <citation type="journal article" date="2011" name="J. Bacteriol.">
        <title>Complete genome sequence of the plant growth-promoting endophyte Burkholderia phytofirmans strain PsJN.</title>
        <authorList>
            <person name="Weilharter A."/>
            <person name="Mitter B."/>
            <person name="Shin M.V."/>
            <person name="Chain P.S."/>
            <person name="Nowak J."/>
            <person name="Sessitsch A."/>
        </authorList>
    </citation>
    <scope>NUCLEOTIDE SEQUENCE [LARGE SCALE GENOMIC DNA]</scope>
    <source>
        <strain>DSM 17436 / LMG 22146 / PsJN</strain>
    </source>
</reference>
<comment type="function">
    <text evidence="1">The RuvA-RuvB-RuvC complex processes Holliday junction (HJ) DNA during genetic recombination and DNA repair, while the RuvA-RuvB complex plays an important role in the rescue of blocked DNA replication forks via replication fork reversal (RFR). RuvA specifically binds to HJ cruciform DNA, conferring on it an open structure. The RuvB hexamer acts as an ATP-dependent pump, pulling dsDNA into and through the RuvAB complex. HJ branch migration allows RuvC to scan DNA until it finds its consensus sequence, where it cleaves and resolves the cruciform DNA.</text>
</comment>
<comment type="subunit">
    <text evidence="1">Homotetramer. Forms an RuvA(8)-RuvB(12)-Holliday junction (HJ) complex. HJ DNA is sandwiched between 2 RuvA tetramers; dsDNA enters through RuvA and exits via RuvB. An RuvB hexamer assembles on each DNA strand where it exits the tetramer. Each RuvB hexamer is contacted by two RuvA subunits (via domain III) on 2 adjacent RuvB subunits; this complex drives branch migration. In the full resolvosome a probable DNA-RuvA(4)-RuvB(12)-RuvC(2) complex forms which resolves the HJ.</text>
</comment>
<comment type="subcellular location">
    <subcellularLocation>
        <location evidence="1">Cytoplasm</location>
    </subcellularLocation>
</comment>
<comment type="domain">
    <text evidence="1">Has three domains with a flexible linker between the domains II and III and assumes an 'L' shape. Domain III is highly mobile and contacts RuvB.</text>
</comment>
<comment type="similarity">
    <text evidence="1">Belongs to the RuvA family.</text>
</comment>
<evidence type="ECO:0000255" key="1">
    <source>
        <dbReference type="HAMAP-Rule" id="MF_00031"/>
    </source>
</evidence>